<feature type="chain" id="PRO_1000013909" description="Ubiquinone biosynthesis O-methyltransferase">
    <location>
        <begin position="1"/>
        <end position="232"/>
    </location>
</feature>
<feature type="binding site" evidence="1">
    <location>
        <position position="36"/>
    </location>
    <ligand>
        <name>S-adenosyl-L-methionine</name>
        <dbReference type="ChEBI" id="CHEBI:59789"/>
    </ligand>
</feature>
<feature type="binding site" evidence="1">
    <location>
        <position position="55"/>
    </location>
    <ligand>
        <name>S-adenosyl-L-methionine</name>
        <dbReference type="ChEBI" id="CHEBI:59789"/>
    </ligand>
</feature>
<feature type="binding site" evidence="1">
    <location>
        <position position="76"/>
    </location>
    <ligand>
        <name>S-adenosyl-L-methionine</name>
        <dbReference type="ChEBI" id="CHEBI:59789"/>
    </ligand>
</feature>
<feature type="binding site" evidence="1">
    <location>
        <position position="120"/>
    </location>
    <ligand>
        <name>S-adenosyl-L-methionine</name>
        <dbReference type="ChEBI" id="CHEBI:59789"/>
    </ligand>
</feature>
<accession>A5W7G3</accession>
<evidence type="ECO:0000255" key="1">
    <source>
        <dbReference type="HAMAP-Rule" id="MF_00472"/>
    </source>
</evidence>
<gene>
    <name evidence="1" type="primary">ubiG</name>
    <name type="ordered locus">Pput_3949</name>
</gene>
<reference key="1">
    <citation type="submission" date="2007-05" db="EMBL/GenBank/DDBJ databases">
        <title>Complete sequence of Pseudomonas putida F1.</title>
        <authorList>
            <consortium name="US DOE Joint Genome Institute"/>
            <person name="Copeland A."/>
            <person name="Lucas S."/>
            <person name="Lapidus A."/>
            <person name="Barry K."/>
            <person name="Detter J.C."/>
            <person name="Glavina del Rio T."/>
            <person name="Hammon N."/>
            <person name="Israni S."/>
            <person name="Dalin E."/>
            <person name="Tice H."/>
            <person name="Pitluck S."/>
            <person name="Chain P."/>
            <person name="Malfatti S."/>
            <person name="Shin M."/>
            <person name="Vergez L."/>
            <person name="Schmutz J."/>
            <person name="Larimer F."/>
            <person name="Land M."/>
            <person name="Hauser L."/>
            <person name="Kyrpides N."/>
            <person name="Lykidis A."/>
            <person name="Parales R."/>
            <person name="Richardson P."/>
        </authorList>
    </citation>
    <scope>NUCLEOTIDE SEQUENCE [LARGE SCALE GENOMIC DNA]</scope>
    <source>
        <strain>ATCC 700007 / DSM 6899 / JCM 31910 / BCRC 17059 / LMG 24140 / F1</strain>
    </source>
</reference>
<sequence>MSNVDRAEIAKFEALAHRWWDRESEFKPLHEINPLRVNWIDERVSLAGKKVLDVGCGGGILSEAMALRGATVTGIDMGEAPLAVAQLHQLESGVQVEYRQITAEALAEEMPEQFDVVTCLEMLEHVPDPSSVIRACYRMVKPGGQVFFSTINRNPKAYLLAIVGAEYILKMLPRGTHDFKKFIRPSELGAWSRDAGLQVKDIIGLTYNPLTKHYKLNSDVDVNYMIQTLREE</sequence>
<name>UBIG_PSEP1</name>
<organism>
    <name type="scientific">Pseudomonas putida (strain ATCC 700007 / DSM 6899 / JCM 31910 / BCRC 17059 / LMG 24140 / F1)</name>
    <dbReference type="NCBI Taxonomy" id="351746"/>
    <lineage>
        <taxon>Bacteria</taxon>
        <taxon>Pseudomonadati</taxon>
        <taxon>Pseudomonadota</taxon>
        <taxon>Gammaproteobacteria</taxon>
        <taxon>Pseudomonadales</taxon>
        <taxon>Pseudomonadaceae</taxon>
        <taxon>Pseudomonas</taxon>
    </lineage>
</organism>
<dbReference type="EC" id="2.1.1.222" evidence="1"/>
<dbReference type="EC" id="2.1.1.64" evidence="1"/>
<dbReference type="EMBL" id="CP000712">
    <property type="protein sequence ID" value="ABQ80073.1"/>
    <property type="molecule type" value="Genomic_DNA"/>
</dbReference>
<dbReference type="SMR" id="A5W7G3"/>
<dbReference type="KEGG" id="ppf:Pput_3949"/>
<dbReference type="eggNOG" id="COG2227">
    <property type="taxonomic scope" value="Bacteria"/>
</dbReference>
<dbReference type="HOGENOM" id="CLU_042432_5_0_6"/>
<dbReference type="UniPathway" id="UPA00232"/>
<dbReference type="GO" id="GO:0102208">
    <property type="term" value="F:2-polyprenyl-6-hydroxyphenol methylase activity"/>
    <property type="evidence" value="ECO:0007669"/>
    <property type="project" value="UniProtKB-EC"/>
</dbReference>
<dbReference type="GO" id="GO:0061542">
    <property type="term" value="F:3-demethylubiquinol 3-O-methyltransferase activity"/>
    <property type="evidence" value="ECO:0007669"/>
    <property type="project" value="UniProtKB-UniRule"/>
</dbReference>
<dbReference type="GO" id="GO:0010420">
    <property type="term" value="F:polyprenyldihydroxybenzoate methyltransferase activity"/>
    <property type="evidence" value="ECO:0007669"/>
    <property type="project" value="InterPro"/>
</dbReference>
<dbReference type="GO" id="GO:0032259">
    <property type="term" value="P:methylation"/>
    <property type="evidence" value="ECO:0007669"/>
    <property type="project" value="UniProtKB-KW"/>
</dbReference>
<dbReference type="CDD" id="cd02440">
    <property type="entry name" value="AdoMet_MTases"/>
    <property type="match status" value="1"/>
</dbReference>
<dbReference type="FunFam" id="3.40.50.150:FF:000028">
    <property type="entry name" value="Ubiquinone biosynthesis O-methyltransferase"/>
    <property type="match status" value="1"/>
</dbReference>
<dbReference type="Gene3D" id="3.40.50.150">
    <property type="entry name" value="Vaccinia Virus protein VP39"/>
    <property type="match status" value="1"/>
</dbReference>
<dbReference type="HAMAP" id="MF_00472">
    <property type="entry name" value="UbiG"/>
    <property type="match status" value="1"/>
</dbReference>
<dbReference type="InterPro" id="IPR029063">
    <property type="entry name" value="SAM-dependent_MTases_sf"/>
</dbReference>
<dbReference type="InterPro" id="IPR010233">
    <property type="entry name" value="UbiG_MeTrfase"/>
</dbReference>
<dbReference type="NCBIfam" id="TIGR01983">
    <property type="entry name" value="UbiG"/>
    <property type="match status" value="1"/>
</dbReference>
<dbReference type="PANTHER" id="PTHR43464">
    <property type="entry name" value="METHYLTRANSFERASE"/>
    <property type="match status" value="1"/>
</dbReference>
<dbReference type="PANTHER" id="PTHR43464:SF19">
    <property type="entry name" value="UBIQUINONE BIOSYNTHESIS O-METHYLTRANSFERASE, MITOCHONDRIAL"/>
    <property type="match status" value="1"/>
</dbReference>
<dbReference type="Pfam" id="PF13489">
    <property type="entry name" value="Methyltransf_23"/>
    <property type="match status" value="1"/>
</dbReference>
<dbReference type="SUPFAM" id="SSF53335">
    <property type="entry name" value="S-adenosyl-L-methionine-dependent methyltransferases"/>
    <property type="match status" value="1"/>
</dbReference>
<keyword id="KW-0489">Methyltransferase</keyword>
<keyword id="KW-0949">S-adenosyl-L-methionine</keyword>
<keyword id="KW-0808">Transferase</keyword>
<keyword id="KW-0831">Ubiquinone biosynthesis</keyword>
<proteinExistence type="inferred from homology"/>
<protein>
    <recommendedName>
        <fullName evidence="1">Ubiquinone biosynthesis O-methyltransferase</fullName>
    </recommendedName>
    <alternativeName>
        <fullName evidence="1">2-polyprenyl-6-hydroxyphenol methylase</fullName>
        <ecNumber evidence="1">2.1.1.222</ecNumber>
    </alternativeName>
    <alternativeName>
        <fullName evidence="1">3-demethylubiquinone 3-O-methyltransferase</fullName>
        <ecNumber evidence="1">2.1.1.64</ecNumber>
    </alternativeName>
</protein>
<comment type="function">
    <text evidence="1">O-methyltransferase that catalyzes the 2 O-methylation steps in the ubiquinone biosynthetic pathway.</text>
</comment>
<comment type="catalytic activity">
    <reaction evidence="1">
        <text>a 3-demethylubiquinol + S-adenosyl-L-methionine = a ubiquinol + S-adenosyl-L-homocysteine + H(+)</text>
        <dbReference type="Rhea" id="RHEA:44380"/>
        <dbReference type="Rhea" id="RHEA-COMP:9566"/>
        <dbReference type="Rhea" id="RHEA-COMP:10914"/>
        <dbReference type="ChEBI" id="CHEBI:15378"/>
        <dbReference type="ChEBI" id="CHEBI:17976"/>
        <dbReference type="ChEBI" id="CHEBI:57856"/>
        <dbReference type="ChEBI" id="CHEBI:59789"/>
        <dbReference type="ChEBI" id="CHEBI:84422"/>
        <dbReference type="EC" id="2.1.1.64"/>
    </reaction>
</comment>
<comment type="catalytic activity">
    <reaction evidence="1">
        <text>a 3-(all-trans-polyprenyl)benzene-1,2-diol + S-adenosyl-L-methionine = a 2-methoxy-6-(all-trans-polyprenyl)phenol + S-adenosyl-L-homocysteine + H(+)</text>
        <dbReference type="Rhea" id="RHEA:31411"/>
        <dbReference type="Rhea" id="RHEA-COMP:9550"/>
        <dbReference type="Rhea" id="RHEA-COMP:9551"/>
        <dbReference type="ChEBI" id="CHEBI:15378"/>
        <dbReference type="ChEBI" id="CHEBI:57856"/>
        <dbReference type="ChEBI" id="CHEBI:59789"/>
        <dbReference type="ChEBI" id="CHEBI:62729"/>
        <dbReference type="ChEBI" id="CHEBI:62731"/>
        <dbReference type="EC" id="2.1.1.222"/>
    </reaction>
</comment>
<comment type="pathway">
    <text evidence="1">Cofactor biosynthesis; ubiquinone biosynthesis.</text>
</comment>
<comment type="similarity">
    <text evidence="1">Belongs to the methyltransferase superfamily. UbiG/COQ3 family.</text>
</comment>